<comment type="function">
    <text evidence="1">Catalyzes the NADPH-dependent reduction of glutamyl-tRNA(Glu) to glutamate 1-semialdehyde (GSA).</text>
</comment>
<comment type="catalytic activity">
    <reaction evidence="1">
        <text>(S)-4-amino-5-oxopentanoate + tRNA(Glu) + NADP(+) = L-glutamyl-tRNA(Glu) + NADPH + H(+)</text>
        <dbReference type="Rhea" id="RHEA:12344"/>
        <dbReference type="Rhea" id="RHEA-COMP:9663"/>
        <dbReference type="Rhea" id="RHEA-COMP:9680"/>
        <dbReference type="ChEBI" id="CHEBI:15378"/>
        <dbReference type="ChEBI" id="CHEBI:57501"/>
        <dbReference type="ChEBI" id="CHEBI:57783"/>
        <dbReference type="ChEBI" id="CHEBI:58349"/>
        <dbReference type="ChEBI" id="CHEBI:78442"/>
        <dbReference type="ChEBI" id="CHEBI:78520"/>
        <dbReference type="EC" id="1.2.1.70"/>
    </reaction>
</comment>
<comment type="pathway">
    <text evidence="1">Porphyrin-containing compound metabolism; protoporphyrin-IX biosynthesis; 5-aminolevulinate from L-glutamyl-tRNA(Glu): step 1/2.</text>
</comment>
<comment type="subunit">
    <text evidence="1">Homodimer.</text>
</comment>
<comment type="domain">
    <text evidence="1">Possesses an unusual extended V-shaped dimeric structure with each monomer consisting of three distinct domains arranged along a curved 'spinal' alpha-helix. The N-terminal catalytic domain specifically recognizes the glutamate moiety of the substrate. The second domain is the NADPH-binding domain, and the third C-terminal domain is responsible for dimerization.</text>
</comment>
<comment type="miscellaneous">
    <text evidence="1">During catalysis, the active site Cys acts as a nucleophile attacking the alpha-carbonyl group of tRNA-bound glutamate with the formation of a thioester intermediate between enzyme and glutamate, and the concomitant release of tRNA(Glu). The thioester intermediate is finally reduced by direct hydride transfer from NADPH, to form the product GSA.</text>
</comment>
<comment type="similarity">
    <text evidence="1">Belongs to the glutamyl-tRNA reductase family.</text>
</comment>
<name>HEM1_DEIRA</name>
<reference key="1">
    <citation type="journal article" date="1999" name="Science">
        <title>Genome sequence of the radioresistant bacterium Deinococcus radiodurans R1.</title>
        <authorList>
            <person name="White O."/>
            <person name="Eisen J.A."/>
            <person name="Heidelberg J.F."/>
            <person name="Hickey E.K."/>
            <person name="Peterson J.D."/>
            <person name="Dodson R.J."/>
            <person name="Haft D.H."/>
            <person name="Gwinn M.L."/>
            <person name="Nelson W.C."/>
            <person name="Richardson D.L."/>
            <person name="Moffat K.S."/>
            <person name="Qin H."/>
            <person name="Jiang L."/>
            <person name="Pamphile W."/>
            <person name="Crosby M."/>
            <person name="Shen M."/>
            <person name="Vamathevan J.J."/>
            <person name="Lam P."/>
            <person name="McDonald L.A."/>
            <person name="Utterback T.R."/>
            <person name="Zalewski C."/>
            <person name="Makarova K.S."/>
            <person name="Aravind L."/>
            <person name="Daly M.J."/>
            <person name="Minton K.W."/>
            <person name="Fleischmann R.D."/>
            <person name="Ketchum K.A."/>
            <person name="Nelson K.E."/>
            <person name="Salzberg S.L."/>
            <person name="Smith H.O."/>
            <person name="Venter J.C."/>
            <person name="Fraser C.M."/>
        </authorList>
    </citation>
    <scope>NUCLEOTIDE SEQUENCE [LARGE SCALE GENOMIC DNA]</scope>
    <source>
        <strain>ATCC 13939 / DSM 20539 / JCM 16871 / CCUG 27074 / LMG 4051 / NBRC 15346 / NCIMB 9279 / VKM B-1422 / R1</strain>
    </source>
</reference>
<accession>Q9RRE5</accession>
<protein>
    <recommendedName>
        <fullName evidence="1">Glutamyl-tRNA reductase</fullName>
        <shortName evidence="1">GluTR</shortName>
        <ecNumber evidence="1">1.2.1.70</ecNumber>
    </recommendedName>
</protein>
<keyword id="KW-0521">NADP</keyword>
<keyword id="KW-0560">Oxidoreductase</keyword>
<keyword id="KW-0627">Porphyrin biosynthesis</keyword>
<keyword id="KW-1185">Reference proteome</keyword>
<organism>
    <name type="scientific">Deinococcus radiodurans (strain ATCC 13939 / DSM 20539 / JCM 16871 / CCUG 27074 / LMG 4051 / NBRC 15346 / NCIMB 9279 / VKM B-1422 / R1)</name>
    <dbReference type="NCBI Taxonomy" id="243230"/>
    <lineage>
        <taxon>Bacteria</taxon>
        <taxon>Thermotogati</taxon>
        <taxon>Deinococcota</taxon>
        <taxon>Deinococci</taxon>
        <taxon>Deinococcales</taxon>
        <taxon>Deinococcaceae</taxon>
        <taxon>Deinococcus</taxon>
    </lineage>
</organism>
<feature type="chain" id="PRO_0000114019" description="Glutamyl-tRNA reductase">
    <location>
        <begin position="1"/>
        <end position="350"/>
    </location>
</feature>
<feature type="active site" description="Nucleophile" evidence="1">
    <location>
        <position position="54"/>
    </location>
</feature>
<feature type="binding site" evidence="1">
    <location>
        <begin position="53"/>
        <end position="56"/>
    </location>
    <ligand>
        <name>substrate</name>
    </ligand>
</feature>
<feature type="binding site" evidence="1">
    <location>
        <position position="105"/>
    </location>
    <ligand>
        <name>substrate</name>
    </ligand>
</feature>
<feature type="binding site" evidence="1">
    <location>
        <begin position="110"/>
        <end position="112"/>
    </location>
    <ligand>
        <name>substrate</name>
    </ligand>
</feature>
<feature type="binding site" evidence="1">
    <location>
        <position position="116"/>
    </location>
    <ligand>
        <name>substrate</name>
    </ligand>
</feature>
<feature type="binding site" evidence="1">
    <location>
        <begin position="185"/>
        <end position="190"/>
    </location>
    <ligand>
        <name>NADP(+)</name>
        <dbReference type="ChEBI" id="CHEBI:58349"/>
    </ligand>
</feature>
<feature type="site" description="Important for activity" evidence="1">
    <location>
        <position position="95"/>
    </location>
</feature>
<sequence>MPQPAPLDFVVVGLNHQTAPVEVRERVAVRPEEEGALLGHLARHADEVLLLATCNRTEVYLAGVHGDPLAAFEGAWGHALLDHLYVYRGEAAVRHLYRVTAGLDSLVIGETQIQGQVKRAWQSARERGLSGTLMNKVVQGALAAGKRVRSHTGLSDKVVSVSSAAVELAQAALGELSQRRALILGAGETAELTLTHLRAAGVQDVLVVNRTAERARALAEKLGGRACPAEELSAALPEVDVVIASSAAPHYVVTAQNVREALAGRPGRAMFLIDISVPRILDPEIASVPGAHLYNLDDLTAVVQRNMQSRRAALPQAEAIIRELGSDLSRWYLTRETQLARQAELALACD</sequence>
<proteinExistence type="inferred from homology"/>
<evidence type="ECO:0000255" key="1">
    <source>
        <dbReference type="HAMAP-Rule" id="MF_00087"/>
    </source>
</evidence>
<dbReference type="EC" id="1.2.1.70" evidence="1"/>
<dbReference type="EMBL" id="AE000513">
    <property type="protein sequence ID" value="AAF12088.1"/>
    <property type="molecule type" value="Genomic_DNA"/>
</dbReference>
<dbReference type="PIR" id="F75259">
    <property type="entry name" value="F75259"/>
</dbReference>
<dbReference type="RefSeq" id="NP_296267.1">
    <property type="nucleotide sequence ID" value="NC_001263.1"/>
</dbReference>
<dbReference type="SMR" id="Q9RRE5"/>
<dbReference type="FunCoup" id="Q9RRE5">
    <property type="interactions" value="356"/>
</dbReference>
<dbReference type="STRING" id="243230.DR_2547"/>
<dbReference type="PaxDb" id="243230-DR_2547"/>
<dbReference type="EnsemblBacteria" id="AAF12088">
    <property type="protein sequence ID" value="AAF12088"/>
    <property type="gene ID" value="DR_2547"/>
</dbReference>
<dbReference type="KEGG" id="dra:DR_2547"/>
<dbReference type="PATRIC" id="fig|243230.17.peg.2790"/>
<dbReference type="eggNOG" id="COG0373">
    <property type="taxonomic scope" value="Bacteria"/>
</dbReference>
<dbReference type="HOGENOM" id="CLU_035113_1_0_0"/>
<dbReference type="InParanoid" id="Q9RRE5"/>
<dbReference type="OrthoDB" id="110209at2"/>
<dbReference type="UniPathway" id="UPA00251">
    <property type="reaction ID" value="UER00316"/>
</dbReference>
<dbReference type="Proteomes" id="UP000002524">
    <property type="component" value="Chromosome 1"/>
</dbReference>
<dbReference type="GO" id="GO:0008883">
    <property type="term" value="F:glutamyl-tRNA reductase activity"/>
    <property type="evidence" value="ECO:0000318"/>
    <property type="project" value="GO_Central"/>
</dbReference>
<dbReference type="GO" id="GO:0050661">
    <property type="term" value="F:NADP binding"/>
    <property type="evidence" value="ECO:0007669"/>
    <property type="project" value="InterPro"/>
</dbReference>
<dbReference type="GO" id="GO:0019353">
    <property type="term" value="P:protoporphyrinogen IX biosynthetic process from glutamate"/>
    <property type="evidence" value="ECO:0000318"/>
    <property type="project" value="GO_Central"/>
</dbReference>
<dbReference type="CDD" id="cd05213">
    <property type="entry name" value="NAD_bind_Glutamyl_tRNA_reduct"/>
    <property type="match status" value="1"/>
</dbReference>
<dbReference type="FunFam" id="3.30.460.30:FF:000001">
    <property type="entry name" value="Glutamyl-tRNA reductase"/>
    <property type="match status" value="1"/>
</dbReference>
<dbReference type="FunFam" id="3.40.50.720:FF:000031">
    <property type="entry name" value="Glutamyl-tRNA reductase"/>
    <property type="match status" value="1"/>
</dbReference>
<dbReference type="Gene3D" id="3.30.460.30">
    <property type="entry name" value="Glutamyl-tRNA reductase, N-terminal domain"/>
    <property type="match status" value="1"/>
</dbReference>
<dbReference type="Gene3D" id="3.40.50.720">
    <property type="entry name" value="NAD(P)-binding Rossmann-like Domain"/>
    <property type="match status" value="1"/>
</dbReference>
<dbReference type="HAMAP" id="MF_00087">
    <property type="entry name" value="Glu_tRNA_reductase"/>
    <property type="match status" value="1"/>
</dbReference>
<dbReference type="InterPro" id="IPR000343">
    <property type="entry name" value="4pyrrol_synth_GluRdtase"/>
</dbReference>
<dbReference type="InterPro" id="IPR015895">
    <property type="entry name" value="4pyrrol_synth_GluRdtase_N"/>
</dbReference>
<dbReference type="InterPro" id="IPR018214">
    <property type="entry name" value="GluRdtase_CS"/>
</dbReference>
<dbReference type="InterPro" id="IPR036343">
    <property type="entry name" value="GluRdtase_N_sf"/>
</dbReference>
<dbReference type="InterPro" id="IPR036291">
    <property type="entry name" value="NAD(P)-bd_dom_sf"/>
</dbReference>
<dbReference type="InterPro" id="IPR006151">
    <property type="entry name" value="Shikm_DH/Glu-tRNA_Rdtase"/>
</dbReference>
<dbReference type="NCBIfam" id="TIGR01035">
    <property type="entry name" value="hemA"/>
    <property type="match status" value="1"/>
</dbReference>
<dbReference type="PANTHER" id="PTHR43013">
    <property type="entry name" value="GLUTAMYL-TRNA REDUCTASE"/>
    <property type="match status" value="1"/>
</dbReference>
<dbReference type="PANTHER" id="PTHR43013:SF1">
    <property type="entry name" value="GLUTAMYL-TRNA REDUCTASE"/>
    <property type="match status" value="1"/>
</dbReference>
<dbReference type="Pfam" id="PF05201">
    <property type="entry name" value="GlutR_N"/>
    <property type="match status" value="1"/>
</dbReference>
<dbReference type="Pfam" id="PF01488">
    <property type="entry name" value="Shikimate_DH"/>
    <property type="match status" value="1"/>
</dbReference>
<dbReference type="PIRSF" id="PIRSF000445">
    <property type="entry name" value="4pyrrol_synth_GluRdtase"/>
    <property type="match status" value="1"/>
</dbReference>
<dbReference type="SUPFAM" id="SSF69742">
    <property type="entry name" value="Glutamyl tRNA-reductase catalytic, N-terminal domain"/>
    <property type="match status" value="1"/>
</dbReference>
<dbReference type="SUPFAM" id="SSF51735">
    <property type="entry name" value="NAD(P)-binding Rossmann-fold domains"/>
    <property type="match status" value="1"/>
</dbReference>
<dbReference type="PROSITE" id="PS00747">
    <property type="entry name" value="GLUTR"/>
    <property type="match status" value="1"/>
</dbReference>
<gene>
    <name evidence="1" type="primary">hemA</name>
    <name type="ordered locus">DR_2547</name>
</gene>